<name>CDKF1_ARATH</name>
<organism>
    <name type="scientific">Arabidopsis thaliana</name>
    <name type="common">Mouse-ear cress</name>
    <dbReference type="NCBI Taxonomy" id="3702"/>
    <lineage>
        <taxon>Eukaryota</taxon>
        <taxon>Viridiplantae</taxon>
        <taxon>Streptophyta</taxon>
        <taxon>Embryophyta</taxon>
        <taxon>Tracheophyta</taxon>
        <taxon>Spermatophyta</taxon>
        <taxon>Magnoliopsida</taxon>
        <taxon>eudicotyledons</taxon>
        <taxon>Gunneridae</taxon>
        <taxon>Pentapetalae</taxon>
        <taxon>rosids</taxon>
        <taxon>malvids</taxon>
        <taxon>Brassicales</taxon>
        <taxon>Brassicaceae</taxon>
        <taxon>Camelineae</taxon>
        <taxon>Arabidopsis</taxon>
    </lineage>
</organism>
<accession>O80345</accession>
<gene>
    <name type="primary">CDKF-1</name>
    <name type="synonym">CAK1</name>
    <name type="ordered locus">At4g28980</name>
    <name type="ORF">F19B15.10</name>
</gene>
<sequence length="479" mass="53752">MDKQPATSWSIHTRPEIIAKYEIFERVGSGAYADVYRARRLSDGLIVALKEIFDYQSAFREIDALTILNGSPNVVVMHEYFWREEENAVLVLEFLRSDLAAVIRDGKRKKKVEGGDGFSVGEIKRWMIQILTGVDACHRNLIVHRDLKPGNMLISDDGVLKLADFGQARILMEHDIVASDENQQAYKLEDKDGETSEPPEVIPDYENSPRQGSDGQEREAMSKDEYFRQVEELKAKQVVRDDTDKDSNVHDGDISCLATCTVSEMDDDLGRNSFSYDADEAVDDTQGLMTSCVGTRWFRPPELLYGSTMYGLEVDLWSLGCVFAELLSLEPLFPGISDIDQISRVTNVLGNLNEEVWPGCVDLPDYKSISFAKVESPLGIEGCLPNHSGDVISLLKKLICYDPASRATTMEMLNDKYLSEEPLPVPVSELYVPPTMSGPDEDSPRKWNDYREMDSDSDFDGFGPMNVKPTSSGFTIEFP</sequence>
<proteinExistence type="evidence at protein level"/>
<keyword id="KW-0067">ATP-binding</keyword>
<keyword id="KW-0131">Cell cycle</keyword>
<keyword id="KW-0132">Cell division</keyword>
<keyword id="KW-0418">Kinase</keyword>
<keyword id="KW-0547">Nucleotide-binding</keyword>
<keyword id="KW-0597">Phosphoprotein</keyword>
<keyword id="KW-1185">Reference proteome</keyword>
<keyword id="KW-0723">Serine/threonine-protein kinase</keyword>
<keyword id="KW-0808">Transferase</keyword>
<evidence type="ECO:0000250" key="1">
    <source>
        <dbReference type="UniProtKB" id="P24100"/>
    </source>
</evidence>
<evidence type="ECO:0000250" key="2">
    <source>
        <dbReference type="UniProtKB" id="Q9C9M7"/>
    </source>
</evidence>
<evidence type="ECO:0000255" key="3">
    <source>
        <dbReference type="PROSITE-ProRule" id="PRU00159"/>
    </source>
</evidence>
<evidence type="ECO:0000255" key="4">
    <source>
        <dbReference type="PROSITE-ProRule" id="PRU10027"/>
    </source>
</evidence>
<evidence type="ECO:0000256" key="5">
    <source>
        <dbReference type="SAM" id="MobiDB-lite"/>
    </source>
</evidence>
<evidence type="ECO:0000269" key="6">
    <source>
    </source>
</evidence>
<evidence type="ECO:0000269" key="7">
    <source>
    </source>
</evidence>
<evidence type="ECO:0000269" key="8">
    <source>
    </source>
</evidence>
<evidence type="ECO:0000269" key="9">
    <source>
    </source>
</evidence>
<evidence type="ECO:0000305" key="10"/>
<evidence type="ECO:0007744" key="11">
    <source>
    </source>
</evidence>
<evidence type="ECO:0007744" key="12">
    <source>
    </source>
</evidence>
<protein>
    <recommendedName>
        <fullName>Cyclin-dependent kinase F-1</fullName>
        <shortName>CDKF;1</shortName>
        <ecNumber>2.7.11.22</ecNumber>
        <ecNumber>2.7.11.23</ecNumber>
    </recommendedName>
    <alternativeName>
        <fullName>CDK-activating kinase 1-At</fullName>
        <shortName>CAK1-At</shortName>
    </alternativeName>
</protein>
<comment type="function">
    <text evidence="6 7 8">CDK-activating kinase that modulates CDKD-2 and CDKD-3 activities by phosphorylation of the T-loop. Activates CDKD-2 C-terminal domain (CTD) kinase activity. Activates CDKA-1 probably by phosphorylation. Possesses a CDK kinase activity independently of association with cyclin CYCH1-1. Phosphorylates the CTD of the large subunit of RNA polymerase II.</text>
</comment>
<comment type="catalytic activity">
    <reaction>
        <text>L-seryl-[protein] + ATP = O-phospho-L-seryl-[protein] + ADP + H(+)</text>
        <dbReference type="Rhea" id="RHEA:17989"/>
        <dbReference type="Rhea" id="RHEA-COMP:9863"/>
        <dbReference type="Rhea" id="RHEA-COMP:11604"/>
        <dbReference type="ChEBI" id="CHEBI:15378"/>
        <dbReference type="ChEBI" id="CHEBI:29999"/>
        <dbReference type="ChEBI" id="CHEBI:30616"/>
        <dbReference type="ChEBI" id="CHEBI:83421"/>
        <dbReference type="ChEBI" id="CHEBI:456216"/>
        <dbReference type="EC" id="2.7.11.22"/>
    </reaction>
</comment>
<comment type="catalytic activity">
    <reaction>
        <text>L-threonyl-[protein] + ATP = O-phospho-L-threonyl-[protein] + ADP + H(+)</text>
        <dbReference type="Rhea" id="RHEA:46608"/>
        <dbReference type="Rhea" id="RHEA-COMP:11060"/>
        <dbReference type="Rhea" id="RHEA-COMP:11605"/>
        <dbReference type="ChEBI" id="CHEBI:15378"/>
        <dbReference type="ChEBI" id="CHEBI:30013"/>
        <dbReference type="ChEBI" id="CHEBI:30616"/>
        <dbReference type="ChEBI" id="CHEBI:61977"/>
        <dbReference type="ChEBI" id="CHEBI:456216"/>
        <dbReference type="EC" id="2.7.11.22"/>
    </reaction>
</comment>
<comment type="catalytic activity">
    <reaction>
        <text>[DNA-directed RNA polymerase] + ATP = phospho-[DNA-directed RNA polymerase] + ADP + H(+)</text>
        <dbReference type="Rhea" id="RHEA:10216"/>
        <dbReference type="Rhea" id="RHEA-COMP:11321"/>
        <dbReference type="Rhea" id="RHEA-COMP:11322"/>
        <dbReference type="ChEBI" id="CHEBI:15378"/>
        <dbReference type="ChEBI" id="CHEBI:30616"/>
        <dbReference type="ChEBI" id="CHEBI:43176"/>
        <dbReference type="ChEBI" id="CHEBI:68546"/>
        <dbReference type="ChEBI" id="CHEBI:456216"/>
        <dbReference type="EC" id="2.7.11.23"/>
    </reaction>
</comment>
<comment type="tissue specificity">
    <text evidence="9">Highly expressed in suspension cell culture. Expressed at low levels in all plant organs.</text>
</comment>
<comment type="similarity">
    <text evidence="10">Belongs to the protein kinase superfamily. CMGC Ser/Thr protein kinase family. CDC2/CDKX subfamily.</text>
</comment>
<feature type="chain" id="PRO_0000293123" description="Cyclin-dependent kinase F-1">
    <location>
        <begin position="1"/>
        <end position="479"/>
    </location>
</feature>
<feature type="domain" description="Protein kinase" evidence="3">
    <location>
        <begin position="21"/>
        <end position="418"/>
    </location>
</feature>
<feature type="region of interest" description="Disordered" evidence="5">
    <location>
        <begin position="187"/>
        <end position="221"/>
    </location>
</feature>
<feature type="region of interest" description="Disordered" evidence="5">
    <location>
        <begin position="434"/>
        <end position="479"/>
    </location>
</feature>
<feature type="compositionally biased region" description="Basic and acidic residues" evidence="5">
    <location>
        <begin position="442"/>
        <end position="454"/>
    </location>
</feature>
<feature type="compositionally biased region" description="Polar residues" evidence="5">
    <location>
        <begin position="468"/>
        <end position="479"/>
    </location>
</feature>
<feature type="active site" description="Proton acceptor" evidence="3 4">
    <location>
        <position position="146"/>
    </location>
</feature>
<feature type="binding site" evidence="3">
    <location>
        <begin position="27"/>
        <end position="35"/>
    </location>
    <ligand>
        <name>ATP</name>
        <dbReference type="ChEBI" id="CHEBI:30616"/>
    </ligand>
</feature>
<feature type="binding site" evidence="3">
    <location>
        <position position="50"/>
    </location>
    <ligand>
        <name>ATP</name>
        <dbReference type="ChEBI" id="CHEBI:30616"/>
    </ligand>
</feature>
<feature type="modified residue" description="Phosphotyrosine" evidence="1">
    <location>
        <position position="32"/>
    </location>
</feature>
<feature type="modified residue" description="Phosphoserine" evidence="11">
    <location>
        <position position="179"/>
    </location>
</feature>
<feature type="modified residue" description="Phosphoserine" evidence="2">
    <location>
        <position position="208"/>
    </location>
</feature>
<feature type="modified residue" description="Phosphoserine" evidence="12">
    <location>
        <position position="247"/>
    </location>
</feature>
<feature type="modified residue" description="Phosphothreonine" evidence="8">
    <location>
        <position position="290"/>
    </location>
</feature>
<feature type="mutagenesis site" description="No effect on CDKA-1 activation." evidence="6">
    <original>K</original>
    <variation>A</variation>
    <location>
        <position position="50"/>
    </location>
</feature>
<feature type="mutagenesis site" description="Abolishes CDKA-1 activation and kinase activity." evidence="8">
    <original>T</original>
    <variation>A</variation>
    <location>
        <position position="290"/>
    </location>
</feature>
<dbReference type="EC" id="2.7.11.22"/>
<dbReference type="EC" id="2.7.11.23"/>
<dbReference type="EMBL" id="AB009399">
    <property type="protein sequence ID" value="BAA28775.1"/>
    <property type="molecule type" value="mRNA"/>
</dbReference>
<dbReference type="EMBL" id="AL078470">
    <property type="protein sequence ID" value="CAB43912.1"/>
    <property type="molecule type" value="Genomic_DNA"/>
</dbReference>
<dbReference type="EMBL" id="AL161574">
    <property type="protein sequence ID" value="CAB79656.1"/>
    <property type="molecule type" value="Genomic_DNA"/>
</dbReference>
<dbReference type="EMBL" id="CP002687">
    <property type="protein sequence ID" value="AEE85567.1"/>
    <property type="molecule type" value="Genomic_DNA"/>
</dbReference>
<dbReference type="EMBL" id="CP002687">
    <property type="protein sequence ID" value="AEE85568.1"/>
    <property type="molecule type" value="Genomic_DNA"/>
</dbReference>
<dbReference type="EMBL" id="CP002687">
    <property type="protein sequence ID" value="ANM67753.1"/>
    <property type="molecule type" value="Genomic_DNA"/>
</dbReference>
<dbReference type="EMBL" id="AY042816">
    <property type="protein sequence ID" value="AAK68756.1"/>
    <property type="molecule type" value="mRNA"/>
</dbReference>
<dbReference type="EMBL" id="AY064627">
    <property type="protein sequence ID" value="AAL47340.1"/>
    <property type="molecule type" value="mRNA"/>
</dbReference>
<dbReference type="PIR" id="T08953">
    <property type="entry name" value="T08953"/>
</dbReference>
<dbReference type="SMR" id="O80345"/>
<dbReference type="BioGRID" id="14306">
    <property type="interactions" value="30"/>
</dbReference>
<dbReference type="FunCoup" id="O80345">
    <property type="interactions" value="2018"/>
</dbReference>
<dbReference type="IntAct" id="O80345">
    <property type="interactions" value="7"/>
</dbReference>
<dbReference type="STRING" id="3702.O80345"/>
<dbReference type="GlyGen" id="O80345">
    <property type="glycosylation" value="2 sites"/>
</dbReference>
<dbReference type="iPTMnet" id="O80345"/>
<dbReference type="PaxDb" id="3702-AT4G28980.2"/>
<dbReference type="ProteomicsDB" id="223978"/>
<dbReference type="DNASU" id="829019"/>
<dbReference type="EnsemblPlants" id="AT4G28980.1">
    <property type="protein sequence ID" value="AT4G28980.1"/>
    <property type="gene ID" value="AT4G28980"/>
</dbReference>
<dbReference type="EnsemblPlants" id="AT4G28980.2">
    <property type="protein sequence ID" value="AT4G28980.2"/>
    <property type="gene ID" value="AT4G28980"/>
</dbReference>
<dbReference type="EnsemblPlants" id="AT4G28980.3">
    <property type="protein sequence ID" value="AT4G28980.3"/>
    <property type="gene ID" value="AT4G28980"/>
</dbReference>
<dbReference type="GeneID" id="829019"/>
<dbReference type="Gramene" id="AT4G28980.1">
    <property type="protein sequence ID" value="AT4G28980.1"/>
    <property type="gene ID" value="AT4G28980"/>
</dbReference>
<dbReference type="Gramene" id="AT4G28980.2">
    <property type="protein sequence ID" value="AT4G28980.2"/>
    <property type="gene ID" value="AT4G28980"/>
</dbReference>
<dbReference type="Gramene" id="AT4G28980.3">
    <property type="protein sequence ID" value="AT4G28980.3"/>
    <property type="gene ID" value="AT4G28980"/>
</dbReference>
<dbReference type="KEGG" id="ath:AT4G28980"/>
<dbReference type="Araport" id="AT4G28980"/>
<dbReference type="TAIR" id="AT4G28980">
    <property type="gene designation" value="CAK1AT"/>
</dbReference>
<dbReference type="eggNOG" id="KOG0594">
    <property type="taxonomic scope" value="Eukaryota"/>
</dbReference>
<dbReference type="HOGENOM" id="CLU_000288_181_1_1"/>
<dbReference type="InParanoid" id="O80345"/>
<dbReference type="OMA" id="WSIHTRR"/>
<dbReference type="OrthoDB" id="1732493at2759"/>
<dbReference type="PhylomeDB" id="O80345"/>
<dbReference type="PRO" id="PR:O80345"/>
<dbReference type="Proteomes" id="UP000006548">
    <property type="component" value="Chromosome 4"/>
</dbReference>
<dbReference type="ExpressionAtlas" id="O80345">
    <property type="expression patterns" value="baseline and differential"/>
</dbReference>
<dbReference type="GO" id="GO:0005737">
    <property type="term" value="C:cytoplasm"/>
    <property type="evidence" value="ECO:0007005"/>
    <property type="project" value="TAIR"/>
</dbReference>
<dbReference type="GO" id="GO:0005634">
    <property type="term" value="C:nucleus"/>
    <property type="evidence" value="ECO:0007005"/>
    <property type="project" value="TAIR"/>
</dbReference>
<dbReference type="GO" id="GO:0005524">
    <property type="term" value="F:ATP binding"/>
    <property type="evidence" value="ECO:0007669"/>
    <property type="project" value="UniProtKB-KW"/>
</dbReference>
<dbReference type="GO" id="GO:0004693">
    <property type="term" value="F:cyclin-dependent protein serine/threonine kinase activity"/>
    <property type="evidence" value="ECO:0007669"/>
    <property type="project" value="UniProtKB-EC"/>
</dbReference>
<dbReference type="GO" id="GO:0106310">
    <property type="term" value="F:protein serine kinase activity"/>
    <property type="evidence" value="ECO:0007669"/>
    <property type="project" value="RHEA"/>
</dbReference>
<dbReference type="GO" id="GO:0004674">
    <property type="term" value="F:protein serine/threonine kinase activity"/>
    <property type="evidence" value="ECO:0000304"/>
    <property type="project" value="TAIR"/>
</dbReference>
<dbReference type="GO" id="GO:0008353">
    <property type="term" value="F:RNA polymerase II CTD heptapeptide repeat kinase activity"/>
    <property type="evidence" value="ECO:0007669"/>
    <property type="project" value="UniProtKB-EC"/>
</dbReference>
<dbReference type="GO" id="GO:0051301">
    <property type="term" value="P:cell division"/>
    <property type="evidence" value="ECO:0007669"/>
    <property type="project" value="UniProtKB-KW"/>
</dbReference>
<dbReference type="GO" id="GO:0010078">
    <property type="term" value="P:maintenance of root meristem identity"/>
    <property type="evidence" value="ECO:0000315"/>
    <property type="project" value="TAIR"/>
</dbReference>
<dbReference type="GO" id="GO:0006468">
    <property type="term" value="P:protein phosphorylation"/>
    <property type="evidence" value="ECO:0000314"/>
    <property type="project" value="TAIR"/>
</dbReference>
<dbReference type="GO" id="GO:0000079">
    <property type="term" value="P:regulation of cyclin-dependent protein serine/threonine kinase activity"/>
    <property type="evidence" value="ECO:0000304"/>
    <property type="project" value="TAIR"/>
</dbReference>
<dbReference type="FunFam" id="3.30.200.20:FF:000664">
    <property type="entry name" value="Cyclin-dependent kinase F-1"/>
    <property type="match status" value="1"/>
</dbReference>
<dbReference type="Gene3D" id="3.30.200.20">
    <property type="entry name" value="Phosphorylase Kinase, domain 1"/>
    <property type="match status" value="1"/>
</dbReference>
<dbReference type="Gene3D" id="1.10.510.10">
    <property type="entry name" value="Transferase(Phosphotransferase) domain 1"/>
    <property type="match status" value="1"/>
</dbReference>
<dbReference type="InterPro" id="IPR050108">
    <property type="entry name" value="CDK"/>
</dbReference>
<dbReference type="InterPro" id="IPR011009">
    <property type="entry name" value="Kinase-like_dom_sf"/>
</dbReference>
<dbReference type="InterPro" id="IPR000719">
    <property type="entry name" value="Prot_kinase_dom"/>
</dbReference>
<dbReference type="InterPro" id="IPR017441">
    <property type="entry name" value="Protein_kinase_ATP_BS"/>
</dbReference>
<dbReference type="InterPro" id="IPR008271">
    <property type="entry name" value="Ser/Thr_kinase_AS"/>
</dbReference>
<dbReference type="PANTHER" id="PTHR24056">
    <property type="entry name" value="CELL DIVISION PROTEIN KINASE"/>
    <property type="match status" value="1"/>
</dbReference>
<dbReference type="PANTHER" id="PTHR24056:SF171">
    <property type="entry name" value="CYCLIN-DEPENDENT KINASE 20"/>
    <property type="match status" value="1"/>
</dbReference>
<dbReference type="Pfam" id="PF00069">
    <property type="entry name" value="Pkinase"/>
    <property type="match status" value="2"/>
</dbReference>
<dbReference type="SMART" id="SM00220">
    <property type="entry name" value="S_TKc"/>
    <property type="match status" value="1"/>
</dbReference>
<dbReference type="SUPFAM" id="SSF56112">
    <property type="entry name" value="Protein kinase-like (PK-like)"/>
    <property type="match status" value="1"/>
</dbReference>
<dbReference type="PROSITE" id="PS00107">
    <property type="entry name" value="PROTEIN_KINASE_ATP"/>
    <property type="match status" value="1"/>
</dbReference>
<dbReference type="PROSITE" id="PS50011">
    <property type="entry name" value="PROTEIN_KINASE_DOM"/>
    <property type="match status" value="1"/>
</dbReference>
<dbReference type="PROSITE" id="PS00108">
    <property type="entry name" value="PROTEIN_KINASE_ST"/>
    <property type="match status" value="1"/>
</dbReference>
<reference key="1">
    <citation type="journal article" date="1998" name="Proc. Natl. Acad. Sci. U.S.A.">
        <title>A distinct cyclin-dependent kinase-activating kinase of Arabidopsis thaliana.</title>
        <authorList>
            <person name="Umeda M."/>
            <person name="Bhalerao R.P."/>
            <person name="Schell J."/>
            <person name="Uchimiya H."/>
            <person name="Koncz C."/>
        </authorList>
    </citation>
    <scope>NUCLEOTIDE SEQUENCE [MRNA]</scope>
    <scope>TISSUE SPECIFICITY</scope>
    <source>
        <strain>cv. Columbia</strain>
    </source>
</reference>
<reference key="2">
    <citation type="journal article" date="1999" name="Nature">
        <title>Sequence and analysis of chromosome 4 of the plant Arabidopsis thaliana.</title>
        <authorList>
            <person name="Mayer K.F.X."/>
            <person name="Schueller C."/>
            <person name="Wambutt R."/>
            <person name="Murphy G."/>
            <person name="Volckaert G."/>
            <person name="Pohl T."/>
            <person name="Duesterhoeft A."/>
            <person name="Stiekema W."/>
            <person name="Entian K.-D."/>
            <person name="Terryn N."/>
            <person name="Harris B."/>
            <person name="Ansorge W."/>
            <person name="Brandt P."/>
            <person name="Grivell L.A."/>
            <person name="Rieger M."/>
            <person name="Weichselgartner M."/>
            <person name="de Simone V."/>
            <person name="Obermaier B."/>
            <person name="Mache R."/>
            <person name="Mueller M."/>
            <person name="Kreis M."/>
            <person name="Delseny M."/>
            <person name="Puigdomenech P."/>
            <person name="Watson M."/>
            <person name="Schmidtheini T."/>
            <person name="Reichert B."/>
            <person name="Portetelle D."/>
            <person name="Perez-Alonso M."/>
            <person name="Boutry M."/>
            <person name="Bancroft I."/>
            <person name="Vos P."/>
            <person name="Hoheisel J."/>
            <person name="Zimmermann W."/>
            <person name="Wedler H."/>
            <person name="Ridley P."/>
            <person name="Langham S.-A."/>
            <person name="McCullagh B."/>
            <person name="Bilham L."/>
            <person name="Robben J."/>
            <person name="van der Schueren J."/>
            <person name="Grymonprez B."/>
            <person name="Chuang Y.-J."/>
            <person name="Vandenbussche F."/>
            <person name="Braeken M."/>
            <person name="Weltjens I."/>
            <person name="Voet M."/>
            <person name="Bastiaens I."/>
            <person name="Aert R."/>
            <person name="Defoor E."/>
            <person name="Weitzenegger T."/>
            <person name="Bothe G."/>
            <person name="Ramsperger U."/>
            <person name="Hilbert H."/>
            <person name="Braun M."/>
            <person name="Holzer E."/>
            <person name="Brandt A."/>
            <person name="Peters S."/>
            <person name="van Staveren M."/>
            <person name="Dirkse W."/>
            <person name="Mooijman P."/>
            <person name="Klein Lankhorst R."/>
            <person name="Rose M."/>
            <person name="Hauf J."/>
            <person name="Koetter P."/>
            <person name="Berneiser S."/>
            <person name="Hempel S."/>
            <person name="Feldpausch M."/>
            <person name="Lamberth S."/>
            <person name="Van den Daele H."/>
            <person name="De Keyser A."/>
            <person name="Buysshaert C."/>
            <person name="Gielen J."/>
            <person name="Villarroel R."/>
            <person name="De Clercq R."/>
            <person name="van Montagu M."/>
            <person name="Rogers J."/>
            <person name="Cronin A."/>
            <person name="Quail M.A."/>
            <person name="Bray-Allen S."/>
            <person name="Clark L."/>
            <person name="Doggett J."/>
            <person name="Hall S."/>
            <person name="Kay M."/>
            <person name="Lennard N."/>
            <person name="McLay K."/>
            <person name="Mayes R."/>
            <person name="Pettett A."/>
            <person name="Rajandream M.A."/>
            <person name="Lyne M."/>
            <person name="Benes V."/>
            <person name="Rechmann S."/>
            <person name="Borkova D."/>
            <person name="Bloecker H."/>
            <person name="Scharfe M."/>
            <person name="Grimm M."/>
            <person name="Loehnert T.-H."/>
            <person name="Dose S."/>
            <person name="de Haan M."/>
            <person name="Maarse A.C."/>
            <person name="Schaefer M."/>
            <person name="Mueller-Auer S."/>
            <person name="Gabel C."/>
            <person name="Fuchs M."/>
            <person name="Fartmann B."/>
            <person name="Granderath K."/>
            <person name="Dauner D."/>
            <person name="Herzl A."/>
            <person name="Neumann S."/>
            <person name="Argiriou A."/>
            <person name="Vitale D."/>
            <person name="Liguori R."/>
            <person name="Piravandi E."/>
            <person name="Massenet O."/>
            <person name="Quigley F."/>
            <person name="Clabauld G."/>
            <person name="Muendlein A."/>
            <person name="Felber R."/>
            <person name="Schnabl S."/>
            <person name="Hiller R."/>
            <person name="Schmidt W."/>
            <person name="Lecharny A."/>
            <person name="Aubourg S."/>
            <person name="Chefdor F."/>
            <person name="Cooke R."/>
            <person name="Berger C."/>
            <person name="Monfort A."/>
            <person name="Casacuberta E."/>
            <person name="Gibbons T."/>
            <person name="Weber N."/>
            <person name="Vandenbol M."/>
            <person name="Bargues M."/>
            <person name="Terol J."/>
            <person name="Torres A."/>
            <person name="Perez-Perez A."/>
            <person name="Purnelle B."/>
            <person name="Bent E."/>
            <person name="Johnson S."/>
            <person name="Tacon D."/>
            <person name="Jesse T."/>
            <person name="Heijnen L."/>
            <person name="Schwarz S."/>
            <person name="Scholler P."/>
            <person name="Heber S."/>
            <person name="Francs P."/>
            <person name="Bielke C."/>
            <person name="Frishman D."/>
            <person name="Haase D."/>
            <person name="Lemcke K."/>
            <person name="Mewes H.-W."/>
            <person name="Stocker S."/>
            <person name="Zaccaria P."/>
            <person name="Bevan M."/>
            <person name="Wilson R.K."/>
            <person name="de la Bastide M."/>
            <person name="Habermann K."/>
            <person name="Parnell L."/>
            <person name="Dedhia N."/>
            <person name="Gnoj L."/>
            <person name="Schutz K."/>
            <person name="Huang E."/>
            <person name="Spiegel L."/>
            <person name="Sekhon M."/>
            <person name="Murray J."/>
            <person name="Sheet P."/>
            <person name="Cordes M."/>
            <person name="Abu-Threideh J."/>
            <person name="Stoneking T."/>
            <person name="Kalicki J."/>
            <person name="Graves T."/>
            <person name="Harmon G."/>
            <person name="Edwards J."/>
            <person name="Latreille P."/>
            <person name="Courtney L."/>
            <person name="Cloud J."/>
            <person name="Abbott A."/>
            <person name="Scott K."/>
            <person name="Johnson D."/>
            <person name="Minx P."/>
            <person name="Bentley D."/>
            <person name="Fulton B."/>
            <person name="Miller N."/>
            <person name="Greco T."/>
            <person name="Kemp K."/>
            <person name="Kramer J."/>
            <person name="Fulton L."/>
            <person name="Mardis E."/>
            <person name="Dante M."/>
            <person name="Pepin K."/>
            <person name="Hillier L.W."/>
            <person name="Nelson J."/>
            <person name="Spieth J."/>
            <person name="Ryan E."/>
            <person name="Andrews S."/>
            <person name="Geisel C."/>
            <person name="Layman D."/>
            <person name="Du H."/>
            <person name="Ali J."/>
            <person name="Berghoff A."/>
            <person name="Jones K."/>
            <person name="Drone K."/>
            <person name="Cotton M."/>
            <person name="Joshu C."/>
            <person name="Antonoiu B."/>
            <person name="Zidanic M."/>
            <person name="Strong C."/>
            <person name="Sun H."/>
            <person name="Lamar B."/>
            <person name="Yordan C."/>
            <person name="Ma P."/>
            <person name="Zhong J."/>
            <person name="Preston R."/>
            <person name="Vil D."/>
            <person name="Shekher M."/>
            <person name="Matero A."/>
            <person name="Shah R."/>
            <person name="Swaby I.K."/>
            <person name="O'Shaughnessy A."/>
            <person name="Rodriguez M."/>
            <person name="Hoffman J."/>
            <person name="Till S."/>
            <person name="Granat S."/>
            <person name="Shohdy N."/>
            <person name="Hasegawa A."/>
            <person name="Hameed A."/>
            <person name="Lodhi M."/>
            <person name="Johnson A."/>
            <person name="Chen E."/>
            <person name="Marra M.A."/>
            <person name="Martienssen R."/>
            <person name="McCombie W.R."/>
        </authorList>
    </citation>
    <scope>NUCLEOTIDE SEQUENCE [LARGE SCALE GENOMIC DNA]</scope>
    <source>
        <strain>cv. Columbia</strain>
    </source>
</reference>
<reference key="3">
    <citation type="journal article" date="2017" name="Plant J.">
        <title>Araport11: a complete reannotation of the Arabidopsis thaliana reference genome.</title>
        <authorList>
            <person name="Cheng C.Y."/>
            <person name="Krishnakumar V."/>
            <person name="Chan A.P."/>
            <person name="Thibaud-Nissen F."/>
            <person name="Schobel S."/>
            <person name="Town C.D."/>
        </authorList>
    </citation>
    <scope>GENOME REANNOTATION</scope>
    <source>
        <strain>cv. Columbia</strain>
    </source>
</reference>
<reference key="4">
    <citation type="journal article" date="2003" name="Science">
        <title>Empirical analysis of transcriptional activity in the Arabidopsis genome.</title>
        <authorList>
            <person name="Yamada K."/>
            <person name="Lim J."/>
            <person name="Dale J.M."/>
            <person name="Chen H."/>
            <person name="Shinn P."/>
            <person name="Palm C.J."/>
            <person name="Southwick A.M."/>
            <person name="Wu H.C."/>
            <person name="Kim C.J."/>
            <person name="Nguyen M."/>
            <person name="Pham P.K."/>
            <person name="Cheuk R.F."/>
            <person name="Karlin-Newmann G."/>
            <person name="Liu S.X."/>
            <person name="Lam B."/>
            <person name="Sakano H."/>
            <person name="Wu T."/>
            <person name="Yu G."/>
            <person name="Miranda M."/>
            <person name="Quach H.L."/>
            <person name="Tripp M."/>
            <person name="Chang C.H."/>
            <person name="Lee J.M."/>
            <person name="Toriumi M.J."/>
            <person name="Chan M.M."/>
            <person name="Tang C.C."/>
            <person name="Onodera C.S."/>
            <person name="Deng J.M."/>
            <person name="Akiyama K."/>
            <person name="Ansari Y."/>
            <person name="Arakawa T."/>
            <person name="Banh J."/>
            <person name="Banno F."/>
            <person name="Bowser L."/>
            <person name="Brooks S.Y."/>
            <person name="Carninci P."/>
            <person name="Chao Q."/>
            <person name="Choy N."/>
            <person name="Enju A."/>
            <person name="Goldsmith A.D."/>
            <person name="Gurjal M."/>
            <person name="Hansen N.F."/>
            <person name="Hayashizaki Y."/>
            <person name="Johnson-Hopson C."/>
            <person name="Hsuan V.W."/>
            <person name="Iida K."/>
            <person name="Karnes M."/>
            <person name="Khan S."/>
            <person name="Koesema E."/>
            <person name="Ishida J."/>
            <person name="Jiang P.X."/>
            <person name="Jones T."/>
            <person name="Kawai J."/>
            <person name="Kamiya A."/>
            <person name="Meyers C."/>
            <person name="Nakajima M."/>
            <person name="Narusaka M."/>
            <person name="Seki M."/>
            <person name="Sakurai T."/>
            <person name="Satou M."/>
            <person name="Tamse R."/>
            <person name="Vaysberg M."/>
            <person name="Wallender E.K."/>
            <person name="Wong C."/>
            <person name="Yamamura Y."/>
            <person name="Yuan S."/>
            <person name="Shinozaki K."/>
            <person name="Davis R.W."/>
            <person name="Theologis A."/>
            <person name="Ecker J.R."/>
        </authorList>
    </citation>
    <scope>NUCLEOTIDE SEQUENCE [LARGE SCALE MRNA]</scope>
    <source>
        <strain>cv. Columbia</strain>
    </source>
</reference>
<reference key="5">
    <citation type="journal article" date="2002" name="J. Biol. Chem.">
        <title>Comparison of Cak1p-like cyclin-dependent kinase-activating kinases.</title>
        <authorList>
            <person name="Tsakraklides V."/>
            <person name="Solomon M.J."/>
        </authorList>
    </citation>
    <scope>FUNCTION</scope>
    <scope>MUTAGENESIS OF LYS-50</scope>
</reference>
<reference key="6">
    <citation type="journal article" date="2002" name="Plant Cell">
        <title>Genome-wide analysis of core cell cycle genes in Arabidopsis.</title>
        <authorList>
            <person name="Vandepoele K."/>
            <person name="Raes J."/>
            <person name="de Veylder L."/>
            <person name="Rouze P."/>
            <person name="Rombauts S."/>
            <person name="Inze D."/>
        </authorList>
    </citation>
    <scope>GENE FAMILY</scope>
    <scope>NOMENCLATURE</scope>
</reference>
<reference key="7">
    <citation type="journal article" date="2004" name="Plant Cell">
        <title>The plant-specific kinase CDKF;1 is involved in activating phosphorylation of cyclin-dependent kinase-activating kinases in Arabidopsis.</title>
        <authorList>
            <person name="Shimotohno A."/>
            <person name="Umeda-Hara C."/>
            <person name="Bisova K."/>
            <person name="Uchimiya H."/>
            <person name="Umeda M."/>
        </authorList>
    </citation>
    <scope>FUNCTION</scope>
</reference>
<reference key="8">
    <citation type="journal article" date="2006" name="Plant J.">
        <title>Diverse phosphoregulatory mechanisms controlling cyclin-dependent kinase-activating kinases in Arabidopsis.</title>
        <authorList>
            <person name="Shimotohno A."/>
            <person name="Ohno R."/>
            <person name="Bisova K."/>
            <person name="Sakaguchi N."/>
            <person name="Huang J."/>
            <person name="Koncz C."/>
            <person name="Uchimiya H."/>
            <person name="Umeda M."/>
        </authorList>
    </citation>
    <scope>FUNCTION</scope>
    <scope>PHOSPHORYLATION AT THR-290</scope>
    <scope>MUTAGENESIS OF THR-290</scope>
</reference>
<reference key="9">
    <citation type="journal article" date="2008" name="J. Proteome Res.">
        <title>Site-specific phosphorylation profiling of Arabidopsis proteins by mass spectrometry and peptide chip analysis.</title>
        <authorList>
            <person name="de la Fuente van Bentem S."/>
            <person name="Anrather D."/>
            <person name="Dohnal I."/>
            <person name="Roitinger E."/>
            <person name="Csaszar E."/>
            <person name="Joore J."/>
            <person name="Buijnink J."/>
            <person name="Carreri A."/>
            <person name="Forzani C."/>
            <person name="Lorkovic Z.J."/>
            <person name="Barta A."/>
            <person name="Lecourieux D."/>
            <person name="Verhounig A."/>
            <person name="Jonak C."/>
            <person name="Hirt H."/>
        </authorList>
    </citation>
    <scope>PHOSPHORYLATION [LARGE SCALE ANALYSIS] AT SER-179</scope>
    <scope>IDENTIFICATION BY MASS SPECTROMETRY [LARGE SCALE ANALYSIS]</scope>
    <source>
        <tissue>Root</tissue>
    </source>
</reference>
<reference key="10">
    <citation type="journal article" date="2009" name="Plant Physiol.">
        <title>Large-scale Arabidopsis phosphoproteome profiling reveals novel chloroplast kinase substrates and phosphorylation networks.</title>
        <authorList>
            <person name="Reiland S."/>
            <person name="Messerli G."/>
            <person name="Baerenfaller K."/>
            <person name="Gerrits B."/>
            <person name="Endler A."/>
            <person name="Grossmann J."/>
            <person name="Gruissem W."/>
            <person name="Baginsky S."/>
        </authorList>
    </citation>
    <scope>PHOSPHORYLATION [LARGE SCALE ANALYSIS] AT SER-247</scope>
    <scope>IDENTIFICATION BY MASS SPECTROMETRY [LARGE SCALE ANALYSIS]</scope>
</reference>